<organism>
    <name type="scientific">Mus musculus</name>
    <name type="common">Mouse</name>
    <dbReference type="NCBI Taxonomy" id="10090"/>
    <lineage>
        <taxon>Eukaryota</taxon>
        <taxon>Metazoa</taxon>
        <taxon>Chordata</taxon>
        <taxon>Craniata</taxon>
        <taxon>Vertebrata</taxon>
        <taxon>Euteleostomi</taxon>
        <taxon>Mammalia</taxon>
        <taxon>Eutheria</taxon>
        <taxon>Euarchontoglires</taxon>
        <taxon>Glires</taxon>
        <taxon>Rodentia</taxon>
        <taxon>Myomorpha</taxon>
        <taxon>Muroidea</taxon>
        <taxon>Muridae</taxon>
        <taxon>Murinae</taxon>
        <taxon>Mus</taxon>
        <taxon>Mus</taxon>
    </lineage>
</organism>
<name>SSR1_MOUSE</name>
<reference key="1">
    <citation type="journal article" date="1992" name="Proc. Natl. Acad. Sci. U.S.A.">
        <title>Cloning and functional characterization of a family of human and mouse somatostatin receptors expressed in brain, gastrointestinal tract, and kidney.</title>
        <authorList>
            <person name="Yamada Y."/>
            <person name="Post S.R."/>
            <person name="Wang K."/>
            <person name="Tager H.S."/>
            <person name="Bell G.I."/>
            <person name="Seino S."/>
        </authorList>
    </citation>
    <scope>NUCLEOTIDE SEQUENCE [GENOMIC DNA]</scope>
</reference>
<reference key="2">
    <citation type="journal article" date="2010" name="Cell">
        <title>A tissue-specific atlas of mouse protein phosphorylation and expression.</title>
        <authorList>
            <person name="Huttlin E.L."/>
            <person name="Jedrychowski M.P."/>
            <person name="Elias J.E."/>
            <person name="Goswami T."/>
            <person name="Rad R."/>
            <person name="Beausoleil S.A."/>
            <person name="Villen J."/>
            <person name="Haas W."/>
            <person name="Sowa M.E."/>
            <person name="Gygi S.P."/>
        </authorList>
    </citation>
    <scope>IDENTIFICATION BY MASS SPECTROMETRY [LARGE SCALE ANALYSIS]</scope>
    <source>
        <tissue>Brain</tissue>
    </source>
</reference>
<comment type="function">
    <text>Receptor for somatostatin with higher affinity for somatostatin-14 than -28. This receptor is coupled via pertussis toxin sensitive G proteins to inhibition of adenylyl cyclase. In addition it stimulates phosphotyrosine phosphatase and Na(+)/H(+) exchanger via pertussis toxin insensitive G proteins.</text>
</comment>
<comment type="interaction">
    <interactant intactId="EBI-7665262">
        <id>P30873</id>
    </interactant>
    <interactant intactId="EBI-300895">
        <id>Q62108</id>
        <label>Dlg4</label>
    </interactant>
    <organismsDiffer>false</organismsDiffer>
    <experiments>3</experiments>
</comment>
<comment type="subcellular location">
    <subcellularLocation>
        <location>Cell membrane</location>
        <topology>Multi-pass membrane protein</topology>
    </subcellularLocation>
</comment>
<comment type="tissue specificity">
    <text>Jejunum and stomach.</text>
</comment>
<comment type="similarity">
    <text evidence="2">Belongs to the G-protein coupled receptor 1 family.</text>
</comment>
<proteinExistence type="evidence at protein level"/>
<gene>
    <name type="primary">Sstr1</name>
    <name type="synonym">Smstr1</name>
</gene>
<evidence type="ECO:0000255" key="1"/>
<evidence type="ECO:0000255" key="2">
    <source>
        <dbReference type="PROSITE-ProRule" id="PRU00521"/>
    </source>
</evidence>
<evidence type="ECO:0000256" key="3">
    <source>
        <dbReference type="SAM" id="MobiDB-lite"/>
    </source>
</evidence>
<dbReference type="EMBL" id="M81831">
    <property type="protein sequence ID" value="AAA58255.1"/>
    <property type="molecule type" value="Genomic_DNA"/>
</dbReference>
<dbReference type="CCDS" id="CCDS36456.1"/>
<dbReference type="PIR" id="C41795">
    <property type="entry name" value="C41795"/>
</dbReference>
<dbReference type="RefSeq" id="NP_001398819.1">
    <property type="nucleotide sequence ID" value="NM_001411890.1"/>
</dbReference>
<dbReference type="RefSeq" id="NP_033242.1">
    <property type="nucleotide sequence ID" value="NM_009216.3"/>
</dbReference>
<dbReference type="RefSeq" id="XP_006515697.1">
    <property type="nucleotide sequence ID" value="XM_006515634.3"/>
</dbReference>
<dbReference type="SMR" id="P30873"/>
<dbReference type="CORUM" id="P30873"/>
<dbReference type="FunCoup" id="P30873">
    <property type="interactions" value="983"/>
</dbReference>
<dbReference type="IntAct" id="P30873">
    <property type="interactions" value="2"/>
</dbReference>
<dbReference type="MINT" id="P30873"/>
<dbReference type="STRING" id="10090.ENSMUSP00000037045"/>
<dbReference type="BindingDB" id="P30873"/>
<dbReference type="ChEMBL" id="CHEMBL4242"/>
<dbReference type="DrugCentral" id="P30873"/>
<dbReference type="GuidetoPHARMACOLOGY" id="355"/>
<dbReference type="GlyCosmos" id="P30873">
    <property type="glycosylation" value="3 sites, No reported glycans"/>
</dbReference>
<dbReference type="GlyGen" id="P30873">
    <property type="glycosylation" value="3 sites, 1 N-linked glycan (1 site)"/>
</dbReference>
<dbReference type="iPTMnet" id="P30873"/>
<dbReference type="PhosphoSitePlus" id="P30873"/>
<dbReference type="SwissPalm" id="P30873"/>
<dbReference type="PaxDb" id="10090-ENSMUSP00000106299"/>
<dbReference type="ProteomicsDB" id="257077"/>
<dbReference type="Antibodypedia" id="4061">
    <property type="antibodies" value="423 antibodies from 39 providers"/>
</dbReference>
<dbReference type="DNASU" id="20605"/>
<dbReference type="Ensembl" id="ENSMUST00000110671.3">
    <property type="protein sequence ID" value="ENSMUSP00000106299.3"/>
    <property type="gene ID" value="ENSMUSG00000035431.6"/>
</dbReference>
<dbReference type="GeneID" id="20605"/>
<dbReference type="KEGG" id="mmu:20605"/>
<dbReference type="UCSC" id="uc007npu.1">
    <property type="organism name" value="mouse"/>
</dbReference>
<dbReference type="AGR" id="MGI:98327"/>
<dbReference type="CTD" id="6751"/>
<dbReference type="MGI" id="MGI:98327">
    <property type="gene designation" value="Sstr1"/>
</dbReference>
<dbReference type="VEuPathDB" id="HostDB:ENSMUSG00000035431"/>
<dbReference type="eggNOG" id="KOG3656">
    <property type="taxonomic scope" value="Eukaryota"/>
</dbReference>
<dbReference type="GeneTree" id="ENSGT00940000161442"/>
<dbReference type="HOGENOM" id="CLU_009579_8_1_1"/>
<dbReference type="InParanoid" id="P30873"/>
<dbReference type="OMA" id="MVNLAVW"/>
<dbReference type="OrthoDB" id="6076970at2759"/>
<dbReference type="PhylomeDB" id="P30873"/>
<dbReference type="TreeFam" id="TF315737"/>
<dbReference type="Reactome" id="R-MMU-375276">
    <property type="pathway name" value="Peptide ligand-binding receptors"/>
</dbReference>
<dbReference type="Reactome" id="R-MMU-418594">
    <property type="pathway name" value="G alpha (i) signalling events"/>
</dbReference>
<dbReference type="BioGRID-ORCS" id="20605">
    <property type="hits" value="3 hits in 77 CRISPR screens"/>
</dbReference>
<dbReference type="PRO" id="PR:P30873"/>
<dbReference type="Proteomes" id="UP000000589">
    <property type="component" value="Chromosome 12"/>
</dbReference>
<dbReference type="RNAct" id="P30873">
    <property type="molecule type" value="protein"/>
</dbReference>
<dbReference type="Bgee" id="ENSMUSG00000035431">
    <property type="expression patterns" value="Expressed in dentate gyrus of hippocampal formation granule cell and 49 other cell types or tissues"/>
</dbReference>
<dbReference type="ExpressionAtlas" id="P30873">
    <property type="expression patterns" value="baseline and differential"/>
</dbReference>
<dbReference type="GO" id="GO:0016020">
    <property type="term" value="C:membrane"/>
    <property type="evidence" value="ECO:0000314"/>
    <property type="project" value="MGI"/>
</dbReference>
<dbReference type="GO" id="GO:0005886">
    <property type="term" value="C:plasma membrane"/>
    <property type="evidence" value="ECO:0000314"/>
    <property type="project" value="MGI"/>
</dbReference>
<dbReference type="GO" id="GO:0004994">
    <property type="term" value="F:somatostatin receptor activity"/>
    <property type="evidence" value="ECO:0000314"/>
    <property type="project" value="MGI"/>
</dbReference>
<dbReference type="GO" id="GO:0071392">
    <property type="term" value="P:cellular response to estradiol stimulus"/>
    <property type="evidence" value="ECO:0007669"/>
    <property type="project" value="Ensembl"/>
</dbReference>
<dbReference type="GO" id="GO:1990830">
    <property type="term" value="P:cellular response to leukemia inhibitory factor"/>
    <property type="evidence" value="ECO:0000270"/>
    <property type="project" value="MGI"/>
</dbReference>
<dbReference type="GO" id="GO:0021549">
    <property type="term" value="P:cerebellum development"/>
    <property type="evidence" value="ECO:0007669"/>
    <property type="project" value="Ensembl"/>
</dbReference>
<dbReference type="GO" id="GO:0030900">
    <property type="term" value="P:forebrain development"/>
    <property type="evidence" value="ECO:0007669"/>
    <property type="project" value="Ensembl"/>
</dbReference>
<dbReference type="GO" id="GO:0007186">
    <property type="term" value="P:G protein-coupled receptor signaling pathway"/>
    <property type="evidence" value="ECO:0000315"/>
    <property type="project" value="MGI"/>
</dbReference>
<dbReference type="GO" id="GO:0007215">
    <property type="term" value="P:glutamate receptor signaling pathway"/>
    <property type="evidence" value="ECO:0000314"/>
    <property type="project" value="MGI"/>
</dbReference>
<dbReference type="GO" id="GO:0007218">
    <property type="term" value="P:neuropeptide signaling pathway"/>
    <property type="evidence" value="ECO:0000314"/>
    <property type="project" value="MGI"/>
</dbReference>
<dbReference type="GO" id="GO:0042594">
    <property type="term" value="P:response to starvation"/>
    <property type="evidence" value="ECO:0007669"/>
    <property type="project" value="Ensembl"/>
</dbReference>
<dbReference type="GO" id="GO:0007283">
    <property type="term" value="P:spermatogenesis"/>
    <property type="evidence" value="ECO:0007669"/>
    <property type="project" value="Ensembl"/>
</dbReference>
<dbReference type="CDD" id="cd15970">
    <property type="entry name" value="7tmA_SSTR1"/>
    <property type="match status" value="1"/>
</dbReference>
<dbReference type="FunFam" id="1.20.1070.10:FF:000060">
    <property type="entry name" value="Somatostatin receptor type 1"/>
    <property type="match status" value="1"/>
</dbReference>
<dbReference type="Gene3D" id="1.20.1070.10">
    <property type="entry name" value="Rhodopsin 7-helix transmembrane proteins"/>
    <property type="match status" value="1"/>
</dbReference>
<dbReference type="InterPro" id="IPR000276">
    <property type="entry name" value="GPCR_Rhodpsn"/>
</dbReference>
<dbReference type="InterPro" id="IPR017452">
    <property type="entry name" value="GPCR_Rhodpsn_7TM"/>
</dbReference>
<dbReference type="InterPro" id="IPR000586">
    <property type="entry name" value="Somatstn_rcpt"/>
</dbReference>
<dbReference type="InterPro" id="IPR001116">
    <property type="entry name" value="Somatstn_rcpt_1"/>
</dbReference>
<dbReference type="PANTHER" id="PTHR24229">
    <property type="entry name" value="NEUROPEPTIDES RECEPTOR"/>
    <property type="match status" value="1"/>
</dbReference>
<dbReference type="PANTHER" id="PTHR24229:SF38">
    <property type="entry name" value="SOMATOSTATIN RECEPTOR TYPE 1"/>
    <property type="match status" value="1"/>
</dbReference>
<dbReference type="Pfam" id="PF00001">
    <property type="entry name" value="7tm_1"/>
    <property type="match status" value="1"/>
</dbReference>
<dbReference type="PRINTS" id="PR00237">
    <property type="entry name" value="GPCRRHODOPSN"/>
</dbReference>
<dbReference type="PRINTS" id="PR00246">
    <property type="entry name" value="SOMATOSTATNR"/>
</dbReference>
<dbReference type="PRINTS" id="PR00587">
    <property type="entry name" value="SOMATOSTTN1R"/>
</dbReference>
<dbReference type="SMART" id="SM01381">
    <property type="entry name" value="7TM_GPCR_Srsx"/>
    <property type="match status" value="1"/>
</dbReference>
<dbReference type="SUPFAM" id="SSF81321">
    <property type="entry name" value="Family A G protein-coupled receptor-like"/>
    <property type="match status" value="1"/>
</dbReference>
<dbReference type="PROSITE" id="PS00237">
    <property type="entry name" value="G_PROTEIN_RECEP_F1_1"/>
    <property type="match status" value="1"/>
</dbReference>
<dbReference type="PROSITE" id="PS50262">
    <property type="entry name" value="G_PROTEIN_RECEP_F1_2"/>
    <property type="match status" value="1"/>
</dbReference>
<protein>
    <recommendedName>
        <fullName>Somatostatin receptor type 1</fullName>
        <shortName>SS-1-R</shortName>
        <shortName>SS1-R</shortName>
        <shortName>SS1R</shortName>
    </recommendedName>
    <alternativeName>
        <fullName>SRIF-2</fullName>
    </alternativeName>
</protein>
<sequence>MFPNGTASSPSSSPSPSPGSCGEGACSRGPGSGAADGMEEPGRNASQNGTLSEGQGSAILISFIYSVVCLVGLCGNSMVIYVILRYAKMKTATNIYILNLAIADELLMLSVPFLVTSTLLRHWPFGALLCRLVLSVDAVNMFTSIYCLTVLSVDRYVAVVHPIKAARYRRPTVAKVVNLGVWVLSLLVILPIVVFSRTAANSDGTVACNMLMPEPAQRWLVGFVLYTFLMGFLLPVGAICLCYVLIIAKMRMVALKAGWQQRKRSERKITLMVMMVVMVFVICWMPFYVVQLVNVFAEQDDATVSQLSVILGYANSCANPILYGFLSDNFKRSFQRILCLSWMDNAAEEPVDYYATALKSRAYSVEDFQPENLESGGVFRNGTCASRISTL</sequence>
<accession>P30873</accession>
<feature type="chain" id="PRO_0000070117" description="Somatostatin receptor type 1">
    <location>
        <begin position="1"/>
        <end position="391"/>
    </location>
</feature>
<feature type="topological domain" description="Extracellular" evidence="1">
    <location>
        <begin position="1"/>
        <end position="56"/>
    </location>
</feature>
<feature type="transmembrane region" description="Helical; Name=1" evidence="1">
    <location>
        <begin position="57"/>
        <end position="84"/>
    </location>
</feature>
<feature type="topological domain" description="Cytoplasmic" evidence="1">
    <location>
        <begin position="85"/>
        <end position="94"/>
    </location>
</feature>
<feature type="transmembrane region" description="Helical; Name=2" evidence="1">
    <location>
        <begin position="95"/>
        <end position="120"/>
    </location>
</feature>
<feature type="topological domain" description="Extracellular" evidence="1">
    <location>
        <begin position="121"/>
        <end position="131"/>
    </location>
</feature>
<feature type="transmembrane region" description="Helical; Name=3" evidence="1">
    <location>
        <begin position="132"/>
        <end position="153"/>
    </location>
</feature>
<feature type="topological domain" description="Cytoplasmic" evidence="1">
    <location>
        <begin position="154"/>
        <end position="175"/>
    </location>
</feature>
<feature type="transmembrane region" description="Helical; Name=4" evidence="1">
    <location>
        <begin position="176"/>
        <end position="196"/>
    </location>
</feature>
<feature type="topological domain" description="Extracellular" evidence="1">
    <location>
        <begin position="197"/>
        <end position="219"/>
    </location>
</feature>
<feature type="transmembrane region" description="Helical; Name=5" evidence="1">
    <location>
        <begin position="220"/>
        <end position="244"/>
    </location>
</feature>
<feature type="topological domain" description="Cytoplasmic" evidence="1">
    <location>
        <begin position="245"/>
        <end position="270"/>
    </location>
</feature>
<feature type="transmembrane region" description="Helical; Name=6" evidence="1">
    <location>
        <begin position="271"/>
        <end position="296"/>
    </location>
</feature>
<feature type="topological domain" description="Extracellular" evidence="1">
    <location>
        <begin position="297"/>
        <end position="303"/>
    </location>
</feature>
<feature type="transmembrane region" description="Helical; Name=7" evidence="1">
    <location>
        <begin position="304"/>
        <end position="327"/>
    </location>
</feature>
<feature type="topological domain" description="Cytoplasmic" evidence="1">
    <location>
        <begin position="328"/>
        <end position="391"/>
    </location>
</feature>
<feature type="region of interest" description="Disordered" evidence="3">
    <location>
        <begin position="1"/>
        <end position="50"/>
    </location>
</feature>
<feature type="compositionally biased region" description="Low complexity" evidence="3">
    <location>
        <begin position="8"/>
        <end position="20"/>
    </location>
</feature>
<feature type="lipid moiety-binding region" description="S-palmitoyl cysteine" evidence="1">
    <location>
        <position position="339"/>
    </location>
</feature>
<feature type="glycosylation site" description="N-linked (GlcNAc...) asparagine" evidence="1">
    <location>
        <position position="4"/>
    </location>
</feature>
<feature type="glycosylation site" description="N-linked (GlcNAc...) asparagine" evidence="1">
    <location>
        <position position="44"/>
    </location>
</feature>
<feature type="glycosylation site" description="N-linked (GlcNAc...) asparagine" evidence="1">
    <location>
        <position position="48"/>
    </location>
</feature>
<feature type="disulfide bond" evidence="2">
    <location>
        <begin position="130"/>
        <end position="208"/>
    </location>
</feature>
<keyword id="KW-1003">Cell membrane</keyword>
<keyword id="KW-1015">Disulfide bond</keyword>
<keyword id="KW-0297">G-protein coupled receptor</keyword>
<keyword id="KW-0325">Glycoprotein</keyword>
<keyword id="KW-0449">Lipoprotein</keyword>
<keyword id="KW-0472">Membrane</keyword>
<keyword id="KW-0564">Palmitate</keyword>
<keyword id="KW-0675">Receptor</keyword>
<keyword id="KW-1185">Reference proteome</keyword>
<keyword id="KW-0807">Transducer</keyword>
<keyword id="KW-0812">Transmembrane</keyword>
<keyword id="KW-1133">Transmembrane helix</keyword>